<name>CODY_STRP7</name>
<comment type="function">
    <text evidence="1">DNA-binding global transcriptional regulator which is involved in the adaptive response to starvation and acts by directly or indirectly controlling the expression of numerous genes in response to nutrient availability. During rapid exponential growth, CodY is highly active and represses genes whose products allow adaptation to nutrient depletion.</text>
</comment>
<comment type="subcellular location">
    <subcellularLocation>
        <location evidence="1">Cytoplasm</location>
    </subcellularLocation>
</comment>
<comment type="similarity">
    <text evidence="1">Belongs to the CodY family.</text>
</comment>
<reference key="1">
    <citation type="journal article" date="2010" name="Genome Biol.">
        <title>Structure and dynamics of the pan-genome of Streptococcus pneumoniae and closely related species.</title>
        <authorList>
            <person name="Donati C."/>
            <person name="Hiller N.L."/>
            <person name="Tettelin H."/>
            <person name="Muzzi A."/>
            <person name="Croucher N.J."/>
            <person name="Angiuoli S.V."/>
            <person name="Oggioni M."/>
            <person name="Dunning Hotopp J.C."/>
            <person name="Hu F.Z."/>
            <person name="Riley D.R."/>
            <person name="Covacci A."/>
            <person name="Mitchell T.J."/>
            <person name="Bentley S.D."/>
            <person name="Kilian M."/>
            <person name="Ehrlich G.D."/>
            <person name="Rappuoli R."/>
            <person name="Moxon E.R."/>
            <person name="Masignani V."/>
        </authorList>
    </citation>
    <scope>NUCLEOTIDE SEQUENCE [LARGE SCALE GENOMIC DNA]</scope>
    <source>
        <strain>70585</strain>
    </source>
</reference>
<accession>C1C8H3</accession>
<gene>
    <name evidence="1" type="primary">codY</name>
    <name type="ordered locus">SP70585_1624</name>
</gene>
<keyword id="KW-0963">Cytoplasm</keyword>
<keyword id="KW-0238">DNA-binding</keyword>
<keyword id="KW-0678">Repressor</keyword>
<keyword id="KW-0804">Transcription</keyword>
<keyword id="KW-0805">Transcription regulation</keyword>
<feature type="chain" id="PRO_1000147209" description="Global transcriptional regulator CodY">
    <location>
        <begin position="1"/>
        <end position="262"/>
    </location>
</feature>
<feature type="DNA-binding region" description="H-T-H motif" evidence="1">
    <location>
        <begin position="207"/>
        <end position="226"/>
    </location>
</feature>
<feature type="region of interest" description="GAF domain" evidence="1">
    <location>
        <begin position="1"/>
        <end position="159"/>
    </location>
</feature>
<dbReference type="EMBL" id="CP000918">
    <property type="protein sequence ID" value="ACO17957.1"/>
    <property type="molecule type" value="Genomic_DNA"/>
</dbReference>
<dbReference type="RefSeq" id="WP_000940733.1">
    <property type="nucleotide sequence ID" value="NC_012468.1"/>
</dbReference>
<dbReference type="SMR" id="C1C8H3"/>
<dbReference type="GeneID" id="45653181"/>
<dbReference type="KEGG" id="snm:SP70585_1624"/>
<dbReference type="HOGENOM" id="CLU_089581_0_0_9"/>
<dbReference type="Proteomes" id="UP000002211">
    <property type="component" value="Chromosome"/>
</dbReference>
<dbReference type="GO" id="GO:0005737">
    <property type="term" value="C:cytoplasm"/>
    <property type="evidence" value="ECO:0007669"/>
    <property type="project" value="UniProtKB-SubCell"/>
</dbReference>
<dbReference type="GO" id="GO:0003677">
    <property type="term" value="F:DNA binding"/>
    <property type="evidence" value="ECO:0007669"/>
    <property type="project" value="UniProtKB-UniRule"/>
</dbReference>
<dbReference type="GO" id="GO:0003700">
    <property type="term" value="F:DNA-binding transcription factor activity"/>
    <property type="evidence" value="ECO:0007669"/>
    <property type="project" value="InterPro"/>
</dbReference>
<dbReference type="GO" id="GO:0005525">
    <property type="term" value="F:GTP binding"/>
    <property type="evidence" value="ECO:0007669"/>
    <property type="project" value="InterPro"/>
</dbReference>
<dbReference type="GO" id="GO:0045892">
    <property type="term" value="P:negative regulation of DNA-templated transcription"/>
    <property type="evidence" value="ECO:0007669"/>
    <property type="project" value="UniProtKB-UniRule"/>
</dbReference>
<dbReference type="CDD" id="cd00090">
    <property type="entry name" value="HTH_ARSR"/>
    <property type="match status" value="1"/>
</dbReference>
<dbReference type="FunFam" id="1.10.10.10:FF:000034">
    <property type="entry name" value="GTP-sensing transcriptional pleiotropic repressor CodY"/>
    <property type="match status" value="1"/>
</dbReference>
<dbReference type="FunFam" id="3.30.450.40:FF:000003">
    <property type="entry name" value="GTP-sensing transcriptional pleiotropic repressor CodY"/>
    <property type="match status" value="1"/>
</dbReference>
<dbReference type="Gene3D" id="3.30.450.40">
    <property type="match status" value="1"/>
</dbReference>
<dbReference type="Gene3D" id="1.10.10.10">
    <property type="entry name" value="Winged helix-like DNA-binding domain superfamily/Winged helix DNA-binding domain"/>
    <property type="match status" value="1"/>
</dbReference>
<dbReference type="HAMAP" id="MF_00621">
    <property type="entry name" value="HTH_type_CodY"/>
    <property type="match status" value="1"/>
</dbReference>
<dbReference type="InterPro" id="IPR011991">
    <property type="entry name" value="ArsR-like_HTH"/>
</dbReference>
<dbReference type="InterPro" id="IPR014154">
    <property type="entry name" value="CodY"/>
</dbReference>
<dbReference type="InterPro" id="IPR029016">
    <property type="entry name" value="GAF-like_dom_sf"/>
</dbReference>
<dbReference type="InterPro" id="IPR013198">
    <property type="entry name" value="GTP_trans_reg_CodY_C"/>
</dbReference>
<dbReference type="InterPro" id="IPR010312">
    <property type="entry name" value="Transc_reg_CodY_N"/>
</dbReference>
<dbReference type="InterPro" id="IPR036388">
    <property type="entry name" value="WH-like_DNA-bd_sf"/>
</dbReference>
<dbReference type="InterPro" id="IPR036390">
    <property type="entry name" value="WH_DNA-bd_sf"/>
</dbReference>
<dbReference type="NCBIfam" id="TIGR02787">
    <property type="entry name" value="codY_Gpos"/>
    <property type="match status" value="1"/>
</dbReference>
<dbReference type="NCBIfam" id="NF003170">
    <property type="entry name" value="PRK04158.1"/>
    <property type="match status" value="1"/>
</dbReference>
<dbReference type="PANTHER" id="PTHR40062:SF1">
    <property type="entry name" value="GLOBAL TRANSCRIPTIONAL REGULATOR CODY"/>
    <property type="match status" value="1"/>
</dbReference>
<dbReference type="PANTHER" id="PTHR40062">
    <property type="entry name" value="GTP-SENSING TRANSCRIPTIONAL PLEIOTROPIC REPRESSOR CODY"/>
    <property type="match status" value="1"/>
</dbReference>
<dbReference type="Pfam" id="PF06018">
    <property type="entry name" value="CodY"/>
    <property type="match status" value="1"/>
</dbReference>
<dbReference type="Pfam" id="PF08222">
    <property type="entry name" value="HTH_CodY"/>
    <property type="match status" value="1"/>
</dbReference>
<dbReference type="PIRSF" id="PIRSF011572">
    <property type="entry name" value="GTP_sensing_CodY"/>
    <property type="match status" value="1"/>
</dbReference>
<dbReference type="SUPFAM" id="SSF46785">
    <property type="entry name" value="Winged helix' DNA-binding domain"/>
    <property type="match status" value="1"/>
</dbReference>
<organism>
    <name type="scientific">Streptococcus pneumoniae (strain 70585)</name>
    <dbReference type="NCBI Taxonomy" id="488221"/>
    <lineage>
        <taxon>Bacteria</taxon>
        <taxon>Bacillati</taxon>
        <taxon>Bacillota</taxon>
        <taxon>Bacilli</taxon>
        <taxon>Lactobacillales</taxon>
        <taxon>Streptococcaceae</taxon>
        <taxon>Streptococcus</taxon>
    </lineage>
</organism>
<sequence length="262" mass="29756">MAHLLEKTRKITSILKRSEEQLQDELPYNAITRQLADIIHCNACIINSKGRLLGYFMRYKTNTDRVEQFFQTKIFPDDYVQGANMIYETEANLPVEHDMSIFPVESRDDFPDGLTTIAPIHVSGIRLGSLIIWRNDKKFEDEDLVLVEIASTVVGIQLLNFQREEDEKNIRRRTAVTMAVNTLSYSELRAVSAILGELNGNEGKLTASVIADRIGITRSVIVNALRKLESAGIIESRSLGMKGTYLKVLISDIFEEVKKRDY</sequence>
<protein>
    <recommendedName>
        <fullName evidence="1">Global transcriptional regulator CodY</fullName>
    </recommendedName>
</protein>
<evidence type="ECO:0000255" key="1">
    <source>
        <dbReference type="HAMAP-Rule" id="MF_00621"/>
    </source>
</evidence>
<proteinExistence type="inferred from homology"/>